<keyword id="KW-0030">Aminoacyl-tRNA synthetase</keyword>
<keyword id="KW-0067">ATP-binding</keyword>
<keyword id="KW-0963">Cytoplasm</keyword>
<keyword id="KW-0436">Ligase</keyword>
<keyword id="KW-0479">Metal-binding</keyword>
<keyword id="KW-0547">Nucleotide-binding</keyword>
<keyword id="KW-0648">Protein biosynthesis</keyword>
<keyword id="KW-1185">Reference proteome</keyword>
<keyword id="KW-0694">RNA-binding</keyword>
<keyword id="KW-0820">tRNA-binding</keyword>
<keyword id="KW-0862">Zinc</keyword>
<evidence type="ECO:0000255" key="1">
    <source>
        <dbReference type="HAMAP-Rule" id="MF_00184"/>
    </source>
</evidence>
<evidence type="ECO:0000255" key="2">
    <source>
        <dbReference type="PROSITE-ProRule" id="PRU01228"/>
    </source>
</evidence>
<organism>
    <name type="scientific">Streptococcus pyogenes serotype M1</name>
    <dbReference type="NCBI Taxonomy" id="301447"/>
    <lineage>
        <taxon>Bacteria</taxon>
        <taxon>Bacillati</taxon>
        <taxon>Bacillota</taxon>
        <taxon>Bacilli</taxon>
        <taxon>Lactobacillales</taxon>
        <taxon>Streptococcaceae</taxon>
        <taxon>Streptococcus</taxon>
    </lineage>
</organism>
<name>SYT_STRP1</name>
<dbReference type="EC" id="6.1.1.3" evidence="1"/>
<dbReference type="EMBL" id="AE004092">
    <property type="protein sequence ID" value="AAK33516.1"/>
    <property type="molecule type" value="Genomic_DNA"/>
</dbReference>
<dbReference type="EMBL" id="CP000017">
    <property type="protein sequence ID" value="AAZ51045.1"/>
    <property type="molecule type" value="Genomic_DNA"/>
</dbReference>
<dbReference type="RefSeq" id="NP_268795.1">
    <property type="nucleotide sequence ID" value="NC_002737.2"/>
</dbReference>
<dbReference type="SMR" id="Q9A115"/>
<dbReference type="PaxDb" id="1314-HKU360_00451"/>
<dbReference type="KEGG" id="spy:SPy_0517"/>
<dbReference type="KEGG" id="spz:M5005_Spy0427"/>
<dbReference type="PATRIC" id="fig|160490.10.peg.442"/>
<dbReference type="HOGENOM" id="CLU_008554_0_1_9"/>
<dbReference type="OMA" id="WYADGMY"/>
<dbReference type="Proteomes" id="UP000000750">
    <property type="component" value="Chromosome"/>
</dbReference>
<dbReference type="GO" id="GO:0005737">
    <property type="term" value="C:cytoplasm"/>
    <property type="evidence" value="ECO:0007669"/>
    <property type="project" value="UniProtKB-SubCell"/>
</dbReference>
<dbReference type="GO" id="GO:0005524">
    <property type="term" value="F:ATP binding"/>
    <property type="evidence" value="ECO:0007669"/>
    <property type="project" value="UniProtKB-UniRule"/>
</dbReference>
<dbReference type="GO" id="GO:0140096">
    <property type="term" value="F:catalytic activity, acting on a protein"/>
    <property type="evidence" value="ECO:0007669"/>
    <property type="project" value="UniProtKB-ARBA"/>
</dbReference>
<dbReference type="GO" id="GO:0046872">
    <property type="term" value="F:metal ion binding"/>
    <property type="evidence" value="ECO:0007669"/>
    <property type="project" value="UniProtKB-KW"/>
</dbReference>
<dbReference type="GO" id="GO:0004829">
    <property type="term" value="F:threonine-tRNA ligase activity"/>
    <property type="evidence" value="ECO:0007669"/>
    <property type="project" value="UniProtKB-UniRule"/>
</dbReference>
<dbReference type="GO" id="GO:0016740">
    <property type="term" value="F:transferase activity"/>
    <property type="evidence" value="ECO:0007669"/>
    <property type="project" value="UniProtKB-ARBA"/>
</dbReference>
<dbReference type="GO" id="GO:0000049">
    <property type="term" value="F:tRNA binding"/>
    <property type="evidence" value="ECO:0007669"/>
    <property type="project" value="UniProtKB-KW"/>
</dbReference>
<dbReference type="GO" id="GO:0006435">
    <property type="term" value="P:threonyl-tRNA aminoacylation"/>
    <property type="evidence" value="ECO:0007669"/>
    <property type="project" value="UniProtKB-UniRule"/>
</dbReference>
<dbReference type="CDD" id="cd01667">
    <property type="entry name" value="TGS_ThrRS"/>
    <property type="match status" value="1"/>
</dbReference>
<dbReference type="CDD" id="cd00860">
    <property type="entry name" value="ThrRS_anticodon"/>
    <property type="match status" value="1"/>
</dbReference>
<dbReference type="CDD" id="cd00771">
    <property type="entry name" value="ThrRS_core"/>
    <property type="match status" value="1"/>
</dbReference>
<dbReference type="FunFam" id="3.10.20.30:FF:000005">
    <property type="entry name" value="Threonine--tRNA ligase"/>
    <property type="match status" value="1"/>
</dbReference>
<dbReference type="FunFam" id="3.30.54.20:FF:000002">
    <property type="entry name" value="Threonine--tRNA ligase"/>
    <property type="match status" value="1"/>
</dbReference>
<dbReference type="FunFam" id="3.30.930.10:FF:000002">
    <property type="entry name" value="Threonine--tRNA ligase"/>
    <property type="match status" value="1"/>
</dbReference>
<dbReference type="FunFam" id="3.40.50.800:FF:000001">
    <property type="entry name" value="Threonine--tRNA ligase"/>
    <property type="match status" value="1"/>
</dbReference>
<dbReference type="FunFam" id="3.30.980.10:FF:000005">
    <property type="entry name" value="Threonyl-tRNA synthetase, mitochondrial"/>
    <property type="match status" value="1"/>
</dbReference>
<dbReference type="Gene3D" id="3.10.20.30">
    <property type="match status" value="1"/>
</dbReference>
<dbReference type="Gene3D" id="3.30.54.20">
    <property type="match status" value="1"/>
</dbReference>
<dbReference type="Gene3D" id="3.40.50.800">
    <property type="entry name" value="Anticodon-binding domain"/>
    <property type="match status" value="1"/>
</dbReference>
<dbReference type="Gene3D" id="3.30.930.10">
    <property type="entry name" value="Bira Bifunctional Protein, Domain 2"/>
    <property type="match status" value="1"/>
</dbReference>
<dbReference type="Gene3D" id="3.30.980.10">
    <property type="entry name" value="Threonyl-trna Synthetase, Chain A, domain 2"/>
    <property type="match status" value="1"/>
</dbReference>
<dbReference type="HAMAP" id="MF_00184">
    <property type="entry name" value="Thr_tRNA_synth"/>
    <property type="match status" value="1"/>
</dbReference>
<dbReference type="InterPro" id="IPR002314">
    <property type="entry name" value="aa-tRNA-synt_IIb"/>
</dbReference>
<dbReference type="InterPro" id="IPR006195">
    <property type="entry name" value="aa-tRNA-synth_II"/>
</dbReference>
<dbReference type="InterPro" id="IPR045864">
    <property type="entry name" value="aa-tRNA-synth_II/BPL/LPL"/>
</dbReference>
<dbReference type="InterPro" id="IPR004154">
    <property type="entry name" value="Anticodon-bd"/>
</dbReference>
<dbReference type="InterPro" id="IPR036621">
    <property type="entry name" value="Anticodon-bd_dom_sf"/>
</dbReference>
<dbReference type="InterPro" id="IPR012675">
    <property type="entry name" value="Beta-grasp_dom_sf"/>
</dbReference>
<dbReference type="InterPro" id="IPR004095">
    <property type="entry name" value="TGS"/>
</dbReference>
<dbReference type="InterPro" id="IPR012676">
    <property type="entry name" value="TGS-like"/>
</dbReference>
<dbReference type="InterPro" id="IPR002320">
    <property type="entry name" value="Thr-tRNA-ligase_IIa"/>
</dbReference>
<dbReference type="InterPro" id="IPR018163">
    <property type="entry name" value="Thr/Ala-tRNA-synth_IIc_edit"/>
</dbReference>
<dbReference type="InterPro" id="IPR047246">
    <property type="entry name" value="ThrRS_anticodon"/>
</dbReference>
<dbReference type="InterPro" id="IPR033728">
    <property type="entry name" value="ThrRS_core"/>
</dbReference>
<dbReference type="InterPro" id="IPR012947">
    <property type="entry name" value="tRNA_SAD"/>
</dbReference>
<dbReference type="NCBIfam" id="TIGR00418">
    <property type="entry name" value="thrS"/>
    <property type="match status" value="1"/>
</dbReference>
<dbReference type="PANTHER" id="PTHR11451:SF56">
    <property type="entry name" value="THREONINE--TRNA LIGASE 1"/>
    <property type="match status" value="1"/>
</dbReference>
<dbReference type="PANTHER" id="PTHR11451">
    <property type="entry name" value="THREONINE-TRNA LIGASE"/>
    <property type="match status" value="1"/>
</dbReference>
<dbReference type="Pfam" id="PF03129">
    <property type="entry name" value="HGTP_anticodon"/>
    <property type="match status" value="1"/>
</dbReference>
<dbReference type="Pfam" id="PF02824">
    <property type="entry name" value="TGS"/>
    <property type="match status" value="1"/>
</dbReference>
<dbReference type="Pfam" id="PF00587">
    <property type="entry name" value="tRNA-synt_2b"/>
    <property type="match status" value="1"/>
</dbReference>
<dbReference type="Pfam" id="PF07973">
    <property type="entry name" value="tRNA_SAD"/>
    <property type="match status" value="1"/>
</dbReference>
<dbReference type="PRINTS" id="PR01047">
    <property type="entry name" value="TRNASYNTHTHR"/>
</dbReference>
<dbReference type="SMART" id="SM00863">
    <property type="entry name" value="tRNA_SAD"/>
    <property type="match status" value="1"/>
</dbReference>
<dbReference type="SUPFAM" id="SSF52954">
    <property type="entry name" value="Class II aaRS ABD-related"/>
    <property type="match status" value="1"/>
</dbReference>
<dbReference type="SUPFAM" id="SSF55681">
    <property type="entry name" value="Class II aaRS and biotin synthetases"/>
    <property type="match status" value="1"/>
</dbReference>
<dbReference type="SUPFAM" id="SSF81271">
    <property type="entry name" value="TGS-like"/>
    <property type="match status" value="1"/>
</dbReference>
<dbReference type="SUPFAM" id="SSF55186">
    <property type="entry name" value="ThrRS/AlaRS common domain"/>
    <property type="match status" value="1"/>
</dbReference>
<dbReference type="PROSITE" id="PS50862">
    <property type="entry name" value="AA_TRNA_LIGASE_II"/>
    <property type="match status" value="1"/>
</dbReference>
<dbReference type="PROSITE" id="PS51880">
    <property type="entry name" value="TGS"/>
    <property type="match status" value="1"/>
</dbReference>
<reference key="1">
    <citation type="journal article" date="2001" name="Proc. Natl. Acad. Sci. U.S.A.">
        <title>Complete genome sequence of an M1 strain of Streptococcus pyogenes.</title>
        <authorList>
            <person name="Ferretti J.J."/>
            <person name="McShan W.M."/>
            <person name="Ajdic D.J."/>
            <person name="Savic D.J."/>
            <person name="Savic G."/>
            <person name="Lyon K."/>
            <person name="Primeaux C."/>
            <person name="Sezate S."/>
            <person name="Suvorov A.N."/>
            <person name="Kenton S."/>
            <person name="Lai H.S."/>
            <person name="Lin S.P."/>
            <person name="Qian Y."/>
            <person name="Jia H.G."/>
            <person name="Najar F.Z."/>
            <person name="Ren Q."/>
            <person name="Zhu H."/>
            <person name="Song L."/>
            <person name="White J."/>
            <person name="Yuan X."/>
            <person name="Clifton S.W."/>
            <person name="Roe B.A."/>
            <person name="McLaughlin R.E."/>
        </authorList>
    </citation>
    <scope>NUCLEOTIDE SEQUENCE [LARGE SCALE GENOMIC DNA]</scope>
    <source>
        <strain>ATCC 700294 / SF370 / Serotype M1</strain>
    </source>
</reference>
<reference key="2">
    <citation type="journal article" date="2005" name="J. Infect. Dis.">
        <title>Evolutionary origin and emergence of a highly successful clone of serotype M1 group A Streptococcus involved multiple horizontal gene transfer events.</title>
        <authorList>
            <person name="Sumby P."/>
            <person name="Porcella S.F."/>
            <person name="Madrigal A.G."/>
            <person name="Barbian K.D."/>
            <person name="Virtaneva K."/>
            <person name="Ricklefs S.M."/>
            <person name="Sturdevant D.E."/>
            <person name="Graham M.R."/>
            <person name="Vuopio-Varkila J."/>
            <person name="Hoe N.P."/>
            <person name="Musser J.M."/>
        </authorList>
    </citation>
    <scope>NUCLEOTIDE SEQUENCE [LARGE SCALE GENOMIC DNA]</scope>
    <source>
        <strain>ATCC BAA-947 / MGAS5005 / Serotype M1</strain>
    </source>
</reference>
<protein>
    <recommendedName>
        <fullName evidence="1">Threonine--tRNA ligase</fullName>
        <ecNumber evidence="1">6.1.1.3</ecNumber>
    </recommendedName>
    <alternativeName>
        <fullName evidence="1">Threonyl-tRNA synthetase</fullName>
        <shortName evidence="1">ThrRS</shortName>
    </alternativeName>
</protein>
<sequence>MIKITFPDGAVREFESGVTTFDIAESISKSLAKKALAGKFNDQLIDTTRAIEEDGSIEIVTPDHKDAYEVLRHSAAHLFAQAAKRLFPNLHLGVGPAIAEGFYYDTDNAEGQISNEDLPRIEAEMQKIVTENYPCIREEVTKEEALELFKDDPYKVELINEHAGAGLTVYRQGEFVDLCRGPHVPSTGRIQVFHLLNVAGAYWRGNSDNNMMQRIYGTAWFDKKDLKAYLTRLEEAKERDHRKLGKELDLFMISQEVGQGLPFWLPDGATIRRTLERYITDKELASGYQHVYTPPLASVELYKTSGHWDHYQEDMFPVMDMGDGEEFVLRPMNCPHHIQVYKNHVRSYRELPIRIAELGMMHRYEKSGALSGLQRVREMTLNDGHIFVTPEQIQEEFQRALQLIIDVYADFNLTDYRFRLSYRDPNDTHKYYDNDEMWENAQSMLKAALDEMGVDYFEAEGEAAFYGPKLDIQVKTALGNEETLSTIQLDFLLPERFDLKYIGADGEEHRPVMIHRGVISTMERFTAILIETYKGAFPTWLAPHQVTVIPISNEAHIDYAWEVAKTLRDRGVRADVDDRNEKMQYKIRASQTSKIPYQLIVGDKEMEDKSVNVRRYGSKTTHTESVEEFVENILADIARKSRPDAQA</sequence>
<proteinExistence type="inferred from homology"/>
<gene>
    <name evidence="1" type="primary">thrS</name>
    <name type="ordered locus">SPy_0517</name>
    <name type="ordered locus">M5005_Spy0427</name>
</gene>
<comment type="function">
    <text evidence="1">Catalyzes the attachment of threonine to tRNA(Thr) in a two-step reaction: L-threonine is first activated by ATP to form Thr-AMP and then transferred to the acceptor end of tRNA(Thr). Also edits incorrectly charged L-seryl-tRNA(Thr).</text>
</comment>
<comment type="catalytic activity">
    <reaction evidence="1">
        <text>tRNA(Thr) + L-threonine + ATP = L-threonyl-tRNA(Thr) + AMP + diphosphate + H(+)</text>
        <dbReference type="Rhea" id="RHEA:24624"/>
        <dbReference type="Rhea" id="RHEA-COMP:9670"/>
        <dbReference type="Rhea" id="RHEA-COMP:9704"/>
        <dbReference type="ChEBI" id="CHEBI:15378"/>
        <dbReference type="ChEBI" id="CHEBI:30616"/>
        <dbReference type="ChEBI" id="CHEBI:33019"/>
        <dbReference type="ChEBI" id="CHEBI:57926"/>
        <dbReference type="ChEBI" id="CHEBI:78442"/>
        <dbReference type="ChEBI" id="CHEBI:78534"/>
        <dbReference type="ChEBI" id="CHEBI:456215"/>
        <dbReference type="EC" id="6.1.1.3"/>
    </reaction>
</comment>
<comment type="cofactor">
    <cofactor evidence="1">
        <name>Zn(2+)</name>
        <dbReference type="ChEBI" id="CHEBI:29105"/>
    </cofactor>
    <text evidence="1">Binds 1 zinc ion per subunit.</text>
</comment>
<comment type="subunit">
    <text evidence="1">Homodimer.</text>
</comment>
<comment type="subcellular location">
    <subcellularLocation>
        <location evidence="1">Cytoplasm</location>
    </subcellularLocation>
</comment>
<comment type="similarity">
    <text evidence="1">Belongs to the class-II aminoacyl-tRNA synthetase family.</text>
</comment>
<accession>Q9A115</accession>
<accession>Q490C3</accession>
<feature type="chain" id="PRO_0000101062" description="Threonine--tRNA ligase">
    <location>
        <begin position="1"/>
        <end position="647"/>
    </location>
</feature>
<feature type="domain" description="TGS" evidence="2">
    <location>
        <begin position="1"/>
        <end position="61"/>
    </location>
</feature>
<feature type="region of interest" description="Catalytic" evidence="1">
    <location>
        <begin position="240"/>
        <end position="538"/>
    </location>
</feature>
<feature type="binding site" evidence="1">
    <location>
        <position position="334"/>
    </location>
    <ligand>
        <name>Zn(2+)</name>
        <dbReference type="ChEBI" id="CHEBI:29105"/>
    </ligand>
</feature>
<feature type="binding site" evidence="1">
    <location>
        <position position="385"/>
    </location>
    <ligand>
        <name>Zn(2+)</name>
        <dbReference type="ChEBI" id="CHEBI:29105"/>
    </ligand>
</feature>
<feature type="binding site" evidence="1">
    <location>
        <position position="515"/>
    </location>
    <ligand>
        <name>Zn(2+)</name>
        <dbReference type="ChEBI" id="CHEBI:29105"/>
    </ligand>
</feature>